<evidence type="ECO:0000255" key="1">
    <source>
        <dbReference type="HAMAP-Rule" id="MF_01393"/>
    </source>
</evidence>
<dbReference type="EMBL" id="CP000513">
    <property type="protein sequence ID" value="ABQ13137.1"/>
    <property type="molecule type" value="Genomic_DNA"/>
</dbReference>
<dbReference type="RefSeq" id="WP_012031452.1">
    <property type="nucleotide sequence ID" value="NC_009446.1"/>
</dbReference>
<dbReference type="SMR" id="A5EXK1"/>
<dbReference type="STRING" id="246195.DNO_1148"/>
<dbReference type="KEGG" id="dno:DNO_1148"/>
<dbReference type="eggNOG" id="COG0356">
    <property type="taxonomic scope" value="Bacteria"/>
</dbReference>
<dbReference type="HOGENOM" id="CLU_041018_1_0_6"/>
<dbReference type="OrthoDB" id="9789241at2"/>
<dbReference type="Proteomes" id="UP000000248">
    <property type="component" value="Chromosome"/>
</dbReference>
<dbReference type="GO" id="GO:0005886">
    <property type="term" value="C:plasma membrane"/>
    <property type="evidence" value="ECO:0007669"/>
    <property type="project" value="UniProtKB-SubCell"/>
</dbReference>
<dbReference type="GO" id="GO:0045259">
    <property type="term" value="C:proton-transporting ATP synthase complex"/>
    <property type="evidence" value="ECO:0007669"/>
    <property type="project" value="UniProtKB-KW"/>
</dbReference>
<dbReference type="GO" id="GO:0046933">
    <property type="term" value="F:proton-transporting ATP synthase activity, rotational mechanism"/>
    <property type="evidence" value="ECO:0007669"/>
    <property type="project" value="UniProtKB-UniRule"/>
</dbReference>
<dbReference type="GO" id="GO:0042777">
    <property type="term" value="P:proton motive force-driven plasma membrane ATP synthesis"/>
    <property type="evidence" value="ECO:0007669"/>
    <property type="project" value="TreeGrafter"/>
</dbReference>
<dbReference type="CDD" id="cd00310">
    <property type="entry name" value="ATP-synt_Fo_a_6"/>
    <property type="match status" value="1"/>
</dbReference>
<dbReference type="FunFam" id="1.20.120.220:FF:000002">
    <property type="entry name" value="ATP synthase subunit a"/>
    <property type="match status" value="1"/>
</dbReference>
<dbReference type="Gene3D" id="1.20.120.220">
    <property type="entry name" value="ATP synthase, F0 complex, subunit A"/>
    <property type="match status" value="1"/>
</dbReference>
<dbReference type="HAMAP" id="MF_01393">
    <property type="entry name" value="ATP_synth_a_bact"/>
    <property type="match status" value="1"/>
</dbReference>
<dbReference type="InterPro" id="IPR045082">
    <property type="entry name" value="ATP_syn_F0_a_bact/chloroplast"/>
</dbReference>
<dbReference type="InterPro" id="IPR000568">
    <property type="entry name" value="ATP_synth_F0_asu"/>
</dbReference>
<dbReference type="InterPro" id="IPR023011">
    <property type="entry name" value="ATP_synth_F0_asu_AS"/>
</dbReference>
<dbReference type="InterPro" id="IPR035908">
    <property type="entry name" value="F0_ATP_A_sf"/>
</dbReference>
<dbReference type="NCBIfam" id="TIGR01131">
    <property type="entry name" value="ATP_synt_6_or_A"/>
    <property type="match status" value="1"/>
</dbReference>
<dbReference type="NCBIfam" id="NF004477">
    <property type="entry name" value="PRK05815.1-1"/>
    <property type="match status" value="1"/>
</dbReference>
<dbReference type="PANTHER" id="PTHR42823">
    <property type="entry name" value="ATP SYNTHASE SUBUNIT A, CHLOROPLASTIC"/>
    <property type="match status" value="1"/>
</dbReference>
<dbReference type="PANTHER" id="PTHR42823:SF3">
    <property type="entry name" value="ATP SYNTHASE SUBUNIT A, CHLOROPLASTIC"/>
    <property type="match status" value="1"/>
</dbReference>
<dbReference type="Pfam" id="PF00119">
    <property type="entry name" value="ATP-synt_A"/>
    <property type="match status" value="1"/>
</dbReference>
<dbReference type="SUPFAM" id="SSF81336">
    <property type="entry name" value="F1F0 ATP synthase subunit A"/>
    <property type="match status" value="1"/>
</dbReference>
<dbReference type="PROSITE" id="PS00449">
    <property type="entry name" value="ATPASE_A"/>
    <property type="match status" value="1"/>
</dbReference>
<keyword id="KW-0066">ATP synthesis</keyword>
<keyword id="KW-0997">Cell inner membrane</keyword>
<keyword id="KW-1003">Cell membrane</keyword>
<keyword id="KW-0138">CF(0)</keyword>
<keyword id="KW-0375">Hydrogen ion transport</keyword>
<keyword id="KW-0406">Ion transport</keyword>
<keyword id="KW-0472">Membrane</keyword>
<keyword id="KW-1185">Reference proteome</keyword>
<keyword id="KW-0812">Transmembrane</keyword>
<keyword id="KW-1133">Transmembrane helix</keyword>
<keyword id="KW-0813">Transport</keyword>
<sequence>MATGGEMTSAEIIHHHMVNLTVGEGFWALHLDTLFFSILLGCSFCWLFYSIGKKAESGVPGFAQNVAEMVFDFIDNTVKGFFGESRSDIGSLALTLFCWIFFWNVMDLIPVDLLPSMAKLIGIPYLKIVPSTDPNATFALSISVVLITLVYTFRNNHGLLGMLRAMGTHPFESSGLIGKILLFPANFALRIVEDMAKIVSLSLRLFGNLFAGEIVFILITFLPFWSQWVPGGAWAIFHILVVTLQAYVFMILTIVYMSMVEKH</sequence>
<organism>
    <name type="scientific">Dichelobacter nodosus (strain VCS1703A)</name>
    <dbReference type="NCBI Taxonomy" id="246195"/>
    <lineage>
        <taxon>Bacteria</taxon>
        <taxon>Pseudomonadati</taxon>
        <taxon>Pseudomonadota</taxon>
        <taxon>Gammaproteobacteria</taxon>
        <taxon>Cardiobacteriales</taxon>
        <taxon>Cardiobacteriaceae</taxon>
        <taxon>Dichelobacter</taxon>
    </lineage>
</organism>
<gene>
    <name evidence="1" type="primary">atpB</name>
    <name type="ordered locus">DNO_1148</name>
</gene>
<reference key="1">
    <citation type="journal article" date="2007" name="Nat. Biotechnol.">
        <title>Genome sequence and identification of candidate vaccine antigens from the animal pathogen Dichelobacter nodosus.</title>
        <authorList>
            <person name="Myers G.S.A."/>
            <person name="Parker D."/>
            <person name="Al-Hasani K."/>
            <person name="Kennan R.M."/>
            <person name="Seemann T."/>
            <person name="Ren Q."/>
            <person name="Badger J.H."/>
            <person name="Selengut J.D."/>
            <person name="Deboy R.T."/>
            <person name="Tettelin H."/>
            <person name="Boyce J.D."/>
            <person name="McCarl V.P."/>
            <person name="Han X."/>
            <person name="Nelson W.C."/>
            <person name="Madupu R."/>
            <person name="Mohamoud Y."/>
            <person name="Holley T."/>
            <person name="Fedorova N."/>
            <person name="Khouri H."/>
            <person name="Bottomley S.P."/>
            <person name="Whittington R.J."/>
            <person name="Adler B."/>
            <person name="Songer J.G."/>
            <person name="Rood J.I."/>
            <person name="Paulsen I.T."/>
        </authorList>
    </citation>
    <scope>NUCLEOTIDE SEQUENCE [LARGE SCALE GENOMIC DNA]</scope>
    <source>
        <strain>VCS1703A</strain>
    </source>
</reference>
<name>ATP6_DICNV</name>
<proteinExistence type="inferred from homology"/>
<accession>A5EXK1</accession>
<feature type="chain" id="PRO_1000145268" description="ATP synthase subunit a">
    <location>
        <begin position="1"/>
        <end position="263"/>
    </location>
</feature>
<feature type="transmembrane region" description="Helical" evidence="1">
    <location>
        <begin position="31"/>
        <end position="51"/>
    </location>
</feature>
<feature type="transmembrane region" description="Helical" evidence="1">
    <location>
        <begin position="89"/>
        <end position="109"/>
    </location>
</feature>
<feature type="transmembrane region" description="Helical" evidence="1">
    <location>
        <begin position="133"/>
        <end position="153"/>
    </location>
</feature>
<feature type="transmembrane region" description="Helical" evidence="1">
    <location>
        <begin position="205"/>
        <end position="225"/>
    </location>
</feature>
<feature type="transmembrane region" description="Helical" evidence="1">
    <location>
        <begin position="235"/>
        <end position="255"/>
    </location>
</feature>
<comment type="function">
    <text evidence="1">Key component of the proton channel; it plays a direct role in the translocation of protons across the membrane.</text>
</comment>
<comment type="subunit">
    <text evidence="1">F-type ATPases have 2 components, CF(1) - the catalytic core - and CF(0) - the membrane proton channel. CF(1) has five subunits: alpha(3), beta(3), gamma(1), delta(1), epsilon(1). CF(0) has three main subunits: a(1), b(2) and c(9-12). The alpha and beta chains form an alternating ring which encloses part of the gamma chain. CF(1) is attached to CF(0) by a central stalk formed by the gamma and epsilon chains, while a peripheral stalk is formed by the delta and b chains.</text>
</comment>
<comment type="subcellular location">
    <subcellularLocation>
        <location evidence="1">Cell inner membrane</location>
        <topology evidence="1">Multi-pass membrane protein</topology>
    </subcellularLocation>
</comment>
<comment type="similarity">
    <text evidence="1">Belongs to the ATPase A chain family.</text>
</comment>
<protein>
    <recommendedName>
        <fullName evidence="1">ATP synthase subunit a</fullName>
    </recommendedName>
    <alternativeName>
        <fullName evidence="1">ATP synthase F0 sector subunit a</fullName>
    </alternativeName>
    <alternativeName>
        <fullName evidence="1">F-ATPase subunit 6</fullName>
    </alternativeName>
</protein>